<evidence type="ECO:0000255" key="1">
    <source>
        <dbReference type="HAMAP-Rule" id="MF_00434"/>
    </source>
</evidence>
<name>PHS_SHEPA</name>
<keyword id="KW-0456">Lyase</keyword>
<keyword id="KW-1185">Reference proteome</keyword>
<reference key="1">
    <citation type="submission" date="2007-10" db="EMBL/GenBank/DDBJ databases">
        <title>Complete sequence of Shewanella pealeana ATCC 700345.</title>
        <authorList>
            <consortium name="US DOE Joint Genome Institute"/>
            <person name="Copeland A."/>
            <person name="Lucas S."/>
            <person name="Lapidus A."/>
            <person name="Barry K."/>
            <person name="Glavina del Rio T."/>
            <person name="Dalin E."/>
            <person name="Tice H."/>
            <person name="Pitluck S."/>
            <person name="Chertkov O."/>
            <person name="Brettin T."/>
            <person name="Bruce D."/>
            <person name="Detter J.C."/>
            <person name="Han C."/>
            <person name="Schmutz J."/>
            <person name="Larimer F."/>
            <person name="Land M."/>
            <person name="Hauser L."/>
            <person name="Kyrpides N."/>
            <person name="Kim E."/>
            <person name="Zhao J.-S.Z."/>
            <person name="Manno D."/>
            <person name="Hawari J."/>
            <person name="Richardson P."/>
        </authorList>
    </citation>
    <scope>NUCLEOTIDE SEQUENCE [LARGE SCALE GENOMIC DNA]</scope>
    <source>
        <strain>ATCC 700345 / ANG-SQ1</strain>
    </source>
</reference>
<proteinExistence type="inferred from homology"/>
<feature type="chain" id="PRO_1000080615" description="Putative pterin-4-alpha-carbinolamine dehydratase">
    <location>
        <begin position="1"/>
        <end position="112"/>
    </location>
</feature>
<comment type="catalytic activity">
    <reaction evidence="1">
        <text>(4aS,6R)-4a-hydroxy-L-erythro-5,6,7,8-tetrahydrobiopterin = (6R)-L-erythro-6,7-dihydrobiopterin + H2O</text>
        <dbReference type="Rhea" id="RHEA:11920"/>
        <dbReference type="ChEBI" id="CHEBI:15377"/>
        <dbReference type="ChEBI" id="CHEBI:15642"/>
        <dbReference type="ChEBI" id="CHEBI:43120"/>
        <dbReference type="EC" id="4.2.1.96"/>
    </reaction>
</comment>
<comment type="similarity">
    <text evidence="1">Belongs to the pterin-4-alpha-carbinolamine dehydratase family.</text>
</comment>
<dbReference type="EC" id="4.2.1.96" evidence="1"/>
<dbReference type="EMBL" id="CP000851">
    <property type="protein sequence ID" value="ABV86774.1"/>
    <property type="molecule type" value="Genomic_DNA"/>
</dbReference>
<dbReference type="RefSeq" id="WP_012154700.1">
    <property type="nucleotide sequence ID" value="NC_009901.1"/>
</dbReference>
<dbReference type="SMR" id="A8H2I7"/>
<dbReference type="STRING" id="398579.Spea_1449"/>
<dbReference type="KEGG" id="spl:Spea_1449"/>
<dbReference type="eggNOG" id="COG2154">
    <property type="taxonomic scope" value="Bacteria"/>
</dbReference>
<dbReference type="HOGENOM" id="CLU_081974_2_2_6"/>
<dbReference type="OrthoDB" id="5294615at2"/>
<dbReference type="Proteomes" id="UP000002608">
    <property type="component" value="Chromosome"/>
</dbReference>
<dbReference type="GO" id="GO:0008124">
    <property type="term" value="F:4-alpha-hydroxytetrahydrobiopterin dehydratase activity"/>
    <property type="evidence" value="ECO:0007669"/>
    <property type="project" value="UniProtKB-UniRule"/>
</dbReference>
<dbReference type="GO" id="GO:0006729">
    <property type="term" value="P:tetrahydrobiopterin biosynthetic process"/>
    <property type="evidence" value="ECO:0007669"/>
    <property type="project" value="InterPro"/>
</dbReference>
<dbReference type="CDD" id="cd00913">
    <property type="entry name" value="PCD_DCoH_subfamily_a"/>
    <property type="match status" value="1"/>
</dbReference>
<dbReference type="Gene3D" id="3.30.1360.20">
    <property type="entry name" value="Transcriptional coactivator/pterin dehydratase"/>
    <property type="match status" value="1"/>
</dbReference>
<dbReference type="HAMAP" id="MF_00434">
    <property type="entry name" value="Pterin_4_alpha"/>
    <property type="match status" value="1"/>
</dbReference>
<dbReference type="InterPro" id="IPR036428">
    <property type="entry name" value="PCD_sf"/>
</dbReference>
<dbReference type="InterPro" id="IPR050376">
    <property type="entry name" value="Pterin-4-alpha-carb_dehyd"/>
</dbReference>
<dbReference type="InterPro" id="IPR001533">
    <property type="entry name" value="Pterin_deHydtase"/>
</dbReference>
<dbReference type="NCBIfam" id="NF002016">
    <property type="entry name" value="PRK00823.1-1"/>
    <property type="match status" value="1"/>
</dbReference>
<dbReference type="PANTHER" id="PTHR42805">
    <property type="entry name" value="PTERIN-4-ALPHA-CARBINOLAMINE DEHYDRATASE-RELATED"/>
    <property type="match status" value="1"/>
</dbReference>
<dbReference type="PANTHER" id="PTHR42805:SF1">
    <property type="entry name" value="PTERIN-4-ALPHA-CARBINOLAMINE DEHYDRATASE-RELATED"/>
    <property type="match status" value="1"/>
</dbReference>
<dbReference type="Pfam" id="PF01329">
    <property type="entry name" value="Pterin_4a"/>
    <property type="match status" value="1"/>
</dbReference>
<dbReference type="SUPFAM" id="SSF55248">
    <property type="entry name" value="PCD-like"/>
    <property type="match status" value="1"/>
</dbReference>
<organism>
    <name type="scientific">Shewanella pealeana (strain ATCC 700345 / ANG-SQ1)</name>
    <dbReference type="NCBI Taxonomy" id="398579"/>
    <lineage>
        <taxon>Bacteria</taxon>
        <taxon>Pseudomonadati</taxon>
        <taxon>Pseudomonadota</taxon>
        <taxon>Gammaproteobacteria</taxon>
        <taxon>Alteromonadales</taxon>
        <taxon>Shewanellaceae</taxon>
        <taxon>Shewanella</taxon>
    </lineage>
</organism>
<gene>
    <name type="ordered locus">Spea_1449</name>
</gene>
<sequence>MTELAQMKCEACQADAPKVTDEELAQLIAKIPDWGVEVRGGVMQLERVYKFKNFKLAMEFTNKLADLAEADFHHPGILTEWGKVTVTWWSHSIKGLHKNDFIMAAKTDTLFQ</sequence>
<protein>
    <recommendedName>
        <fullName evidence="1">Putative pterin-4-alpha-carbinolamine dehydratase</fullName>
        <shortName evidence="1">PHS</shortName>
        <ecNumber evidence="1">4.2.1.96</ecNumber>
    </recommendedName>
    <alternativeName>
        <fullName evidence="1">4-alpha-hydroxy-tetrahydropterin dehydratase</fullName>
    </alternativeName>
    <alternativeName>
        <fullName evidence="1">Pterin carbinolamine dehydratase</fullName>
        <shortName evidence="1">PCD</shortName>
    </alternativeName>
</protein>
<accession>A8H2I7</accession>